<sequence>MKRIGILTSGGDAPGMNAAVRAVARKAMHEGLEVYGINYGFAGLVAGDIFKMNESTVGDKIQRGGTMLYSARYPQFAQEEGQLRGVEQLNKFGIEALVVIGGDGSYHGALALTRHGFNTIGLPGTIDNDIPYTDFTIGFDTAVNTVVEAVDRLRDTAASHERTFVIEVMGREAGDIALWSGVAGGAEDVIIPEHDFDVKKIASKLQSSRERGQKHAVILLAEGVMHADQFAKELAAHGDFQLRSTVLGHIVRGGAPSARDRVLASQMGSYAVELLLQGKGALAVGIENNKITAHDVRTLFDAKHHAELSLYTLAEELTF</sequence>
<organism>
    <name type="scientific">Lacticaseibacillus casei (strain BL23)</name>
    <name type="common">Lactobacillus casei</name>
    <dbReference type="NCBI Taxonomy" id="543734"/>
    <lineage>
        <taxon>Bacteria</taxon>
        <taxon>Bacillati</taxon>
        <taxon>Bacillota</taxon>
        <taxon>Bacilli</taxon>
        <taxon>Lactobacillales</taxon>
        <taxon>Lactobacillaceae</taxon>
        <taxon>Lacticaseibacillus</taxon>
    </lineage>
</organism>
<accession>B3WE64</accession>
<evidence type="ECO:0000255" key="1">
    <source>
        <dbReference type="HAMAP-Rule" id="MF_00339"/>
    </source>
</evidence>
<proteinExistence type="inferred from homology"/>
<comment type="function">
    <text evidence="1">Catalyzes the phosphorylation of D-fructose 6-phosphate to fructose 1,6-bisphosphate by ATP, the first committing step of glycolysis.</text>
</comment>
<comment type="catalytic activity">
    <reaction evidence="1">
        <text>beta-D-fructose 6-phosphate + ATP = beta-D-fructose 1,6-bisphosphate + ADP + H(+)</text>
        <dbReference type="Rhea" id="RHEA:16109"/>
        <dbReference type="ChEBI" id="CHEBI:15378"/>
        <dbReference type="ChEBI" id="CHEBI:30616"/>
        <dbReference type="ChEBI" id="CHEBI:32966"/>
        <dbReference type="ChEBI" id="CHEBI:57634"/>
        <dbReference type="ChEBI" id="CHEBI:456216"/>
        <dbReference type="EC" id="2.7.1.11"/>
    </reaction>
</comment>
<comment type="cofactor">
    <cofactor evidence="1">
        <name>Mg(2+)</name>
        <dbReference type="ChEBI" id="CHEBI:18420"/>
    </cofactor>
</comment>
<comment type="activity regulation">
    <text evidence="1">Allosterically activated by ADP and other diphosphonucleosides, and allosterically inhibited by phosphoenolpyruvate.</text>
</comment>
<comment type="pathway">
    <text evidence="1">Carbohydrate degradation; glycolysis; D-glyceraldehyde 3-phosphate and glycerone phosphate from D-glucose: step 3/4.</text>
</comment>
<comment type="subunit">
    <text evidence="1">Homotetramer.</text>
</comment>
<comment type="subcellular location">
    <subcellularLocation>
        <location evidence="1">Cytoplasm</location>
    </subcellularLocation>
</comment>
<comment type="similarity">
    <text evidence="1">Belongs to the phosphofructokinase type A (PFKA) family. ATP-dependent PFK group I subfamily. Prokaryotic clade 'B1' sub-subfamily.</text>
</comment>
<protein>
    <recommendedName>
        <fullName evidence="1">ATP-dependent 6-phosphofructokinase</fullName>
        <shortName evidence="1">ATP-PFK</shortName>
        <shortName evidence="1">Phosphofructokinase</shortName>
        <ecNumber evidence="1">2.7.1.11</ecNumber>
    </recommendedName>
    <alternativeName>
        <fullName evidence="1">Phosphohexokinase</fullName>
    </alternativeName>
</protein>
<reference key="1">
    <citation type="submission" date="2008-06" db="EMBL/GenBank/DDBJ databases">
        <title>Lactobacillus casei BL23 complete genome sequence.</title>
        <authorList>
            <person name="Maze A."/>
            <person name="Boel G."/>
            <person name="Bourand A."/>
            <person name="Loux V."/>
            <person name="Gibrat J.F."/>
            <person name="Zuniga M."/>
            <person name="Hartke A."/>
            <person name="Deutscher J."/>
        </authorList>
    </citation>
    <scope>NUCLEOTIDE SEQUENCE [LARGE SCALE GENOMIC DNA]</scope>
    <source>
        <strain>BL23</strain>
    </source>
</reference>
<gene>
    <name evidence="1" type="primary">pfkA</name>
    <name type="ordered locus">LCABL_15840</name>
</gene>
<dbReference type="EC" id="2.7.1.11" evidence="1"/>
<dbReference type="EMBL" id="FM177140">
    <property type="protein sequence ID" value="CAQ66665.1"/>
    <property type="molecule type" value="Genomic_DNA"/>
</dbReference>
<dbReference type="SMR" id="B3WE64"/>
<dbReference type="KEGG" id="lcb:LCABL_15840"/>
<dbReference type="HOGENOM" id="CLU_020655_0_1_9"/>
<dbReference type="UniPathway" id="UPA00109">
    <property type="reaction ID" value="UER00182"/>
</dbReference>
<dbReference type="GO" id="GO:0005945">
    <property type="term" value="C:6-phosphofructokinase complex"/>
    <property type="evidence" value="ECO:0007669"/>
    <property type="project" value="TreeGrafter"/>
</dbReference>
<dbReference type="GO" id="GO:0003872">
    <property type="term" value="F:6-phosphofructokinase activity"/>
    <property type="evidence" value="ECO:0007669"/>
    <property type="project" value="UniProtKB-UniRule"/>
</dbReference>
<dbReference type="GO" id="GO:0016208">
    <property type="term" value="F:AMP binding"/>
    <property type="evidence" value="ECO:0007669"/>
    <property type="project" value="TreeGrafter"/>
</dbReference>
<dbReference type="GO" id="GO:0005524">
    <property type="term" value="F:ATP binding"/>
    <property type="evidence" value="ECO:0007669"/>
    <property type="project" value="UniProtKB-KW"/>
</dbReference>
<dbReference type="GO" id="GO:0070095">
    <property type="term" value="F:fructose-6-phosphate binding"/>
    <property type="evidence" value="ECO:0007669"/>
    <property type="project" value="TreeGrafter"/>
</dbReference>
<dbReference type="GO" id="GO:0042802">
    <property type="term" value="F:identical protein binding"/>
    <property type="evidence" value="ECO:0007669"/>
    <property type="project" value="TreeGrafter"/>
</dbReference>
<dbReference type="GO" id="GO:0046872">
    <property type="term" value="F:metal ion binding"/>
    <property type="evidence" value="ECO:0007669"/>
    <property type="project" value="UniProtKB-KW"/>
</dbReference>
<dbReference type="GO" id="GO:0048029">
    <property type="term" value="F:monosaccharide binding"/>
    <property type="evidence" value="ECO:0007669"/>
    <property type="project" value="TreeGrafter"/>
</dbReference>
<dbReference type="GO" id="GO:0061621">
    <property type="term" value="P:canonical glycolysis"/>
    <property type="evidence" value="ECO:0007669"/>
    <property type="project" value="TreeGrafter"/>
</dbReference>
<dbReference type="GO" id="GO:0030388">
    <property type="term" value="P:fructose 1,6-bisphosphate metabolic process"/>
    <property type="evidence" value="ECO:0007669"/>
    <property type="project" value="TreeGrafter"/>
</dbReference>
<dbReference type="GO" id="GO:0006002">
    <property type="term" value="P:fructose 6-phosphate metabolic process"/>
    <property type="evidence" value="ECO:0007669"/>
    <property type="project" value="InterPro"/>
</dbReference>
<dbReference type="FunFam" id="3.40.50.450:FF:000001">
    <property type="entry name" value="ATP-dependent 6-phosphofructokinase"/>
    <property type="match status" value="1"/>
</dbReference>
<dbReference type="FunFam" id="3.40.50.460:FF:000002">
    <property type="entry name" value="ATP-dependent 6-phosphofructokinase"/>
    <property type="match status" value="1"/>
</dbReference>
<dbReference type="Gene3D" id="3.40.50.450">
    <property type="match status" value="1"/>
</dbReference>
<dbReference type="Gene3D" id="3.40.50.460">
    <property type="entry name" value="Phosphofructokinase domain"/>
    <property type="match status" value="1"/>
</dbReference>
<dbReference type="HAMAP" id="MF_00339">
    <property type="entry name" value="Phosphofructokinase_I_B1"/>
    <property type="match status" value="1"/>
</dbReference>
<dbReference type="InterPro" id="IPR022953">
    <property type="entry name" value="ATP_PFK"/>
</dbReference>
<dbReference type="InterPro" id="IPR012003">
    <property type="entry name" value="ATP_PFK_prok-type"/>
</dbReference>
<dbReference type="InterPro" id="IPR012828">
    <property type="entry name" value="PFKA_ATP_prok"/>
</dbReference>
<dbReference type="InterPro" id="IPR000023">
    <property type="entry name" value="Phosphofructokinase_dom"/>
</dbReference>
<dbReference type="InterPro" id="IPR035966">
    <property type="entry name" value="PKF_sf"/>
</dbReference>
<dbReference type="NCBIfam" id="TIGR02482">
    <property type="entry name" value="PFKA_ATP"/>
    <property type="match status" value="1"/>
</dbReference>
<dbReference type="NCBIfam" id="NF002872">
    <property type="entry name" value="PRK03202.1"/>
    <property type="match status" value="1"/>
</dbReference>
<dbReference type="PANTHER" id="PTHR13697:SF4">
    <property type="entry name" value="ATP-DEPENDENT 6-PHOSPHOFRUCTOKINASE"/>
    <property type="match status" value="1"/>
</dbReference>
<dbReference type="PANTHER" id="PTHR13697">
    <property type="entry name" value="PHOSPHOFRUCTOKINASE"/>
    <property type="match status" value="1"/>
</dbReference>
<dbReference type="Pfam" id="PF00365">
    <property type="entry name" value="PFK"/>
    <property type="match status" value="1"/>
</dbReference>
<dbReference type="PIRSF" id="PIRSF000532">
    <property type="entry name" value="ATP_PFK_prok"/>
    <property type="match status" value="1"/>
</dbReference>
<dbReference type="PRINTS" id="PR00476">
    <property type="entry name" value="PHFRCTKINASE"/>
</dbReference>
<dbReference type="SUPFAM" id="SSF53784">
    <property type="entry name" value="Phosphofructokinase"/>
    <property type="match status" value="1"/>
</dbReference>
<keyword id="KW-0021">Allosteric enzyme</keyword>
<keyword id="KW-0067">ATP-binding</keyword>
<keyword id="KW-0963">Cytoplasm</keyword>
<keyword id="KW-0324">Glycolysis</keyword>
<keyword id="KW-0418">Kinase</keyword>
<keyword id="KW-0460">Magnesium</keyword>
<keyword id="KW-0479">Metal-binding</keyword>
<keyword id="KW-0547">Nucleotide-binding</keyword>
<keyword id="KW-0808">Transferase</keyword>
<feature type="chain" id="PRO_1000120048" description="ATP-dependent 6-phosphofructokinase">
    <location>
        <begin position="1"/>
        <end position="319"/>
    </location>
</feature>
<feature type="active site" description="Proton acceptor" evidence="1">
    <location>
        <position position="127"/>
    </location>
</feature>
<feature type="binding site" evidence="1">
    <location>
        <position position="11"/>
    </location>
    <ligand>
        <name>ATP</name>
        <dbReference type="ChEBI" id="CHEBI:30616"/>
    </ligand>
</feature>
<feature type="binding site" evidence="1">
    <location>
        <begin position="21"/>
        <end position="25"/>
    </location>
    <ligand>
        <name>ADP</name>
        <dbReference type="ChEBI" id="CHEBI:456216"/>
        <note>allosteric activator; ligand shared between dimeric partners</note>
    </ligand>
</feature>
<feature type="binding site" evidence="1">
    <location>
        <begin position="72"/>
        <end position="73"/>
    </location>
    <ligand>
        <name>ATP</name>
        <dbReference type="ChEBI" id="CHEBI:30616"/>
    </ligand>
</feature>
<feature type="binding site" evidence="1">
    <location>
        <begin position="102"/>
        <end position="105"/>
    </location>
    <ligand>
        <name>ATP</name>
        <dbReference type="ChEBI" id="CHEBI:30616"/>
    </ligand>
</feature>
<feature type="binding site" evidence="1">
    <location>
        <position position="103"/>
    </location>
    <ligand>
        <name>Mg(2+)</name>
        <dbReference type="ChEBI" id="CHEBI:18420"/>
        <note>catalytic</note>
    </ligand>
</feature>
<feature type="binding site" description="in other chain" evidence="1">
    <location>
        <begin position="125"/>
        <end position="127"/>
    </location>
    <ligand>
        <name>substrate</name>
        <note>ligand shared between dimeric partners</note>
    </ligand>
</feature>
<feature type="binding site" description="in other chain" evidence="1">
    <location>
        <position position="154"/>
    </location>
    <ligand>
        <name>ADP</name>
        <dbReference type="ChEBI" id="CHEBI:456216"/>
        <note>allosteric activator; ligand shared between dimeric partners</note>
    </ligand>
</feature>
<feature type="binding site" evidence="1">
    <location>
        <position position="162"/>
    </location>
    <ligand>
        <name>substrate</name>
        <note>ligand shared between dimeric partners</note>
    </ligand>
</feature>
<feature type="binding site" description="in other chain" evidence="1">
    <location>
        <begin position="169"/>
        <end position="171"/>
    </location>
    <ligand>
        <name>substrate</name>
        <note>ligand shared between dimeric partners</note>
    </ligand>
</feature>
<feature type="binding site" description="in other chain" evidence="1">
    <location>
        <begin position="185"/>
        <end position="187"/>
    </location>
    <ligand>
        <name>ADP</name>
        <dbReference type="ChEBI" id="CHEBI:456216"/>
        <note>allosteric activator; ligand shared between dimeric partners</note>
    </ligand>
</feature>
<feature type="binding site" description="in other chain" evidence="1">
    <location>
        <position position="211"/>
    </location>
    <ligand>
        <name>ADP</name>
        <dbReference type="ChEBI" id="CHEBI:456216"/>
        <note>allosteric activator; ligand shared between dimeric partners</note>
    </ligand>
</feature>
<feature type="binding site" description="in other chain" evidence="1">
    <location>
        <position position="222"/>
    </location>
    <ligand>
        <name>substrate</name>
        <note>ligand shared between dimeric partners</note>
    </ligand>
</feature>
<feature type="binding site" evidence="1">
    <location>
        <position position="243"/>
    </location>
    <ligand>
        <name>substrate</name>
        <note>ligand shared between dimeric partners</note>
    </ligand>
</feature>
<feature type="binding site" description="in other chain" evidence="1">
    <location>
        <begin position="249"/>
        <end position="252"/>
    </location>
    <ligand>
        <name>substrate</name>
        <note>ligand shared between dimeric partners</note>
    </ligand>
</feature>
<name>PFKA_LACCB</name>